<reference key="1">
    <citation type="journal article" date="2003" name="Plant Mol. Biol.">
        <title>OsSEND-1: a new RAD2 nuclease family member in higher plants.</title>
        <authorList>
            <person name="Furukawa T."/>
            <person name="Kimura S."/>
            <person name="Ishibashi T."/>
            <person name="Mori Y."/>
            <person name="Hashimoto J."/>
            <person name="Sakaguchi K."/>
        </authorList>
    </citation>
    <scope>NUCLEOTIDE SEQUENCE [MRNA]</scope>
    <scope>FUNCTION</scope>
    <scope>COFACTOR</scope>
    <scope>TISSUE SPECIFICITY</scope>
    <scope>INDUCTION</scope>
    <source>
        <strain>cv. Nipponbare</strain>
    </source>
</reference>
<reference key="2">
    <citation type="journal article" date="2005" name="Nature">
        <title>The map-based sequence of the rice genome.</title>
        <authorList>
            <consortium name="International rice genome sequencing project (IRGSP)"/>
        </authorList>
    </citation>
    <scope>NUCLEOTIDE SEQUENCE [LARGE SCALE GENOMIC DNA]</scope>
    <source>
        <strain>cv. Nipponbare</strain>
    </source>
</reference>
<reference key="3">
    <citation type="journal article" date="2008" name="Nucleic Acids Res.">
        <title>The rice annotation project database (RAP-DB): 2008 update.</title>
        <authorList>
            <consortium name="The rice annotation project (RAP)"/>
        </authorList>
    </citation>
    <scope>GENOME REANNOTATION</scope>
    <source>
        <strain>cv. Nipponbare</strain>
    </source>
</reference>
<reference key="4">
    <citation type="journal article" date="2013" name="Rice">
        <title>Improvement of the Oryza sativa Nipponbare reference genome using next generation sequence and optical map data.</title>
        <authorList>
            <person name="Kawahara Y."/>
            <person name="de la Bastide M."/>
            <person name="Hamilton J.P."/>
            <person name="Kanamori H."/>
            <person name="McCombie W.R."/>
            <person name="Ouyang S."/>
            <person name="Schwartz D.C."/>
            <person name="Tanaka T."/>
            <person name="Wu J."/>
            <person name="Zhou S."/>
            <person name="Childs K.L."/>
            <person name="Davidson R.M."/>
            <person name="Lin H."/>
            <person name="Quesada-Ocampo L."/>
            <person name="Vaillancourt B."/>
            <person name="Sakai H."/>
            <person name="Lee S.S."/>
            <person name="Kim J."/>
            <person name="Numa H."/>
            <person name="Itoh T."/>
            <person name="Buell C.R."/>
            <person name="Matsumoto T."/>
        </authorList>
    </citation>
    <scope>GENOME REANNOTATION</scope>
    <source>
        <strain>cv. Nipponbare</strain>
    </source>
</reference>
<reference key="5">
    <citation type="journal article" date="2005" name="PLoS Biol.">
        <title>The genomes of Oryza sativa: a history of duplications.</title>
        <authorList>
            <person name="Yu J."/>
            <person name="Wang J."/>
            <person name="Lin W."/>
            <person name="Li S."/>
            <person name="Li H."/>
            <person name="Zhou J."/>
            <person name="Ni P."/>
            <person name="Dong W."/>
            <person name="Hu S."/>
            <person name="Zeng C."/>
            <person name="Zhang J."/>
            <person name="Zhang Y."/>
            <person name="Li R."/>
            <person name="Xu Z."/>
            <person name="Li S."/>
            <person name="Li X."/>
            <person name="Zheng H."/>
            <person name="Cong L."/>
            <person name="Lin L."/>
            <person name="Yin J."/>
            <person name="Geng J."/>
            <person name="Li G."/>
            <person name="Shi J."/>
            <person name="Liu J."/>
            <person name="Lv H."/>
            <person name="Li J."/>
            <person name="Wang J."/>
            <person name="Deng Y."/>
            <person name="Ran L."/>
            <person name="Shi X."/>
            <person name="Wang X."/>
            <person name="Wu Q."/>
            <person name="Li C."/>
            <person name="Ren X."/>
            <person name="Wang J."/>
            <person name="Wang X."/>
            <person name="Li D."/>
            <person name="Liu D."/>
            <person name="Zhang X."/>
            <person name="Ji Z."/>
            <person name="Zhao W."/>
            <person name="Sun Y."/>
            <person name="Zhang Z."/>
            <person name="Bao J."/>
            <person name="Han Y."/>
            <person name="Dong L."/>
            <person name="Ji J."/>
            <person name="Chen P."/>
            <person name="Wu S."/>
            <person name="Liu J."/>
            <person name="Xiao Y."/>
            <person name="Bu D."/>
            <person name="Tan J."/>
            <person name="Yang L."/>
            <person name="Ye C."/>
            <person name="Zhang J."/>
            <person name="Xu J."/>
            <person name="Zhou Y."/>
            <person name="Yu Y."/>
            <person name="Zhang B."/>
            <person name="Zhuang S."/>
            <person name="Wei H."/>
            <person name="Liu B."/>
            <person name="Lei M."/>
            <person name="Yu H."/>
            <person name="Li Y."/>
            <person name="Xu H."/>
            <person name="Wei S."/>
            <person name="He X."/>
            <person name="Fang L."/>
            <person name="Zhang Z."/>
            <person name="Zhang Y."/>
            <person name="Huang X."/>
            <person name="Su Z."/>
            <person name="Tong W."/>
            <person name="Li J."/>
            <person name="Tong Z."/>
            <person name="Li S."/>
            <person name="Ye J."/>
            <person name="Wang L."/>
            <person name="Fang L."/>
            <person name="Lei T."/>
            <person name="Chen C.-S."/>
            <person name="Chen H.-C."/>
            <person name="Xu Z."/>
            <person name="Li H."/>
            <person name="Huang H."/>
            <person name="Zhang F."/>
            <person name="Xu H."/>
            <person name="Li N."/>
            <person name="Zhao C."/>
            <person name="Li S."/>
            <person name="Dong L."/>
            <person name="Huang Y."/>
            <person name="Li L."/>
            <person name="Xi Y."/>
            <person name="Qi Q."/>
            <person name="Li W."/>
            <person name="Zhang B."/>
            <person name="Hu W."/>
            <person name="Zhang Y."/>
            <person name="Tian X."/>
            <person name="Jiao Y."/>
            <person name="Liang X."/>
            <person name="Jin J."/>
            <person name="Gao L."/>
            <person name="Zheng W."/>
            <person name="Hao B."/>
            <person name="Liu S.-M."/>
            <person name="Wang W."/>
            <person name="Yuan L."/>
            <person name="Cao M."/>
            <person name="McDermott J."/>
            <person name="Samudrala R."/>
            <person name="Wang J."/>
            <person name="Wong G.K.-S."/>
            <person name="Yang H."/>
        </authorList>
    </citation>
    <scope>NUCLEOTIDE SEQUENCE [LARGE SCALE GENOMIC DNA]</scope>
    <source>
        <strain>cv. Nipponbare</strain>
    </source>
</reference>
<feature type="chain" id="PRO_0000315625" description="Single-strand DNA endonuclease 1">
    <location>
        <begin position="1"/>
        <end position="641"/>
    </location>
</feature>
<feature type="region of interest" description="N-domain">
    <location>
        <begin position="1"/>
        <end position="90"/>
    </location>
</feature>
<feature type="region of interest" description="XPG-N domain" evidence="2">
    <location>
        <begin position="2"/>
        <end position="97"/>
    </location>
</feature>
<feature type="region of interest" description="I-domain">
    <location>
        <begin position="132"/>
        <end position="221"/>
    </location>
</feature>
<feature type="region of interest" description="I-domain" evidence="4">
    <location>
        <begin position="132"/>
        <end position="220"/>
    </location>
</feature>
<feature type="region of interest" description="XPG-I domain" evidence="2">
    <location>
        <begin position="132"/>
        <end position="217"/>
    </location>
</feature>
<feature type="region of interest" description="5'-3' exonuclease domain" evidence="2">
    <location>
        <begin position="217"/>
        <end position="350"/>
    </location>
</feature>
<feature type="region of interest" description="Disordered" evidence="7">
    <location>
        <begin position="428"/>
        <end position="448"/>
    </location>
</feature>
<feature type="region of interest" description="Disordered" evidence="7">
    <location>
        <begin position="572"/>
        <end position="615"/>
    </location>
</feature>
<feature type="compositionally biased region" description="Gly residues" evidence="7">
    <location>
        <begin position="580"/>
        <end position="590"/>
    </location>
</feature>
<feature type="binding site" evidence="1">
    <location>
        <position position="30"/>
    </location>
    <ligand>
        <name>Mg(2+)</name>
        <dbReference type="ChEBI" id="CHEBI:18420"/>
        <label>1</label>
    </ligand>
</feature>
<feature type="binding site" evidence="2">
    <location>
        <position position="76"/>
    </location>
    <ligand>
        <name>Mg(2+)</name>
        <dbReference type="ChEBI" id="CHEBI:18420"/>
        <label>1</label>
    </ligand>
</feature>
<feature type="binding site" evidence="2">
    <location>
        <position position="144"/>
    </location>
    <ligand>
        <name>Mg(2+)</name>
        <dbReference type="ChEBI" id="CHEBI:18420"/>
        <label>1</label>
    </ligand>
</feature>
<feature type="binding site" evidence="3">
    <location>
        <position position="146"/>
    </location>
    <ligand>
        <name>Mg(2+)</name>
        <dbReference type="ChEBI" id="CHEBI:18420"/>
        <label>1</label>
    </ligand>
</feature>
<feature type="binding site" evidence="6">
    <location>
        <position position="165"/>
    </location>
    <ligand>
        <name>Mg(2+)</name>
        <dbReference type="ChEBI" id="CHEBI:18420"/>
        <label>2</label>
    </ligand>
</feature>
<feature type="binding site" evidence="6">
    <location>
        <position position="167"/>
    </location>
    <ligand>
        <name>Mg(2+)</name>
        <dbReference type="ChEBI" id="CHEBI:18420"/>
        <label>2</label>
    </ligand>
</feature>
<feature type="binding site" evidence="3">
    <location>
        <position position="217"/>
    </location>
    <ligand>
        <name>Mg(2+)</name>
        <dbReference type="ChEBI" id="CHEBI:18420"/>
        <label>2</label>
    </ligand>
</feature>
<protein>
    <recommendedName>
        <fullName evidence="9">Single-strand DNA endonuclease 1</fullName>
        <shortName evidence="9">OsSEND-1</shortName>
        <ecNumber>3.1.-.-</ecNumber>
    </recommendedName>
    <alternativeName>
        <fullName evidence="10">Flap endonuclease GEN-like 2</fullName>
        <shortName evidence="10">XPG-like endonuclease 2</shortName>
    </alternativeName>
</protein>
<dbReference type="EC" id="3.1.-.-"/>
<dbReference type="EMBL" id="AB074260">
    <property type="protein sequence ID" value="BAB72003.1"/>
    <property type="molecule type" value="mRNA"/>
</dbReference>
<dbReference type="EMBL" id="AP008214">
    <property type="protein sequence ID" value="BAF22676.1"/>
    <property type="molecule type" value="Genomic_DNA"/>
</dbReference>
<dbReference type="EMBL" id="AP014964">
    <property type="status" value="NOT_ANNOTATED_CDS"/>
    <property type="molecule type" value="Genomic_DNA"/>
</dbReference>
<dbReference type="EMBL" id="CM000145">
    <property type="protein sequence ID" value="EEE67892.1"/>
    <property type="molecule type" value="Genomic_DNA"/>
</dbReference>
<dbReference type="RefSeq" id="XP_015650609.1">
    <property type="nucleotide sequence ID" value="XM_015795123.1"/>
</dbReference>
<dbReference type="SMR" id="Q8W5R1"/>
<dbReference type="FunCoup" id="Q8W5R1">
    <property type="interactions" value="140"/>
</dbReference>
<dbReference type="STRING" id="39947.Q8W5R1"/>
<dbReference type="PaxDb" id="39947-Q8W5R1"/>
<dbReference type="EnsemblPlants" id="Os08t0101600-02">
    <property type="protein sequence ID" value="Os08t0101600-02"/>
    <property type="gene ID" value="Os08g0101600"/>
</dbReference>
<dbReference type="Gramene" id="Os08t0101600-02">
    <property type="protein sequence ID" value="Os08t0101600-02"/>
    <property type="gene ID" value="Os08g0101600"/>
</dbReference>
<dbReference type="KEGG" id="dosa:Os08g0101600"/>
<dbReference type="eggNOG" id="KOG2519">
    <property type="taxonomic scope" value="Eukaryota"/>
</dbReference>
<dbReference type="InParanoid" id="Q8W5R1"/>
<dbReference type="OrthoDB" id="2959108at2759"/>
<dbReference type="Proteomes" id="UP000000763">
    <property type="component" value="Chromosome 8"/>
</dbReference>
<dbReference type="Proteomes" id="UP000007752">
    <property type="component" value="Chromosome 8"/>
</dbReference>
<dbReference type="Proteomes" id="UP000059680">
    <property type="component" value="Chromosome 8"/>
</dbReference>
<dbReference type="GO" id="GO:0005634">
    <property type="term" value="C:nucleus"/>
    <property type="evidence" value="ECO:0007669"/>
    <property type="project" value="UniProtKB-SubCell"/>
</dbReference>
<dbReference type="GO" id="GO:0017108">
    <property type="term" value="F:5'-flap endonuclease activity"/>
    <property type="evidence" value="ECO:0000318"/>
    <property type="project" value="GO_Central"/>
</dbReference>
<dbReference type="GO" id="GO:0008821">
    <property type="term" value="F:crossover junction DNA endonuclease activity"/>
    <property type="evidence" value="ECO:0007669"/>
    <property type="project" value="EnsemblPlants"/>
</dbReference>
<dbReference type="GO" id="GO:0003677">
    <property type="term" value="F:DNA binding"/>
    <property type="evidence" value="ECO:0007669"/>
    <property type="project" value="InterPro"/>
</dbReference>
<dbReference type="GO" id="GO:0046872">
    <property type="term" value="F:metal ion binding"/>
    <property type="evidence" value="ECO:0007669"/>
    <property type="project" value="UniProtKB-KW"/>
</dbReference>
<dbReference type="GO" id="GO:0006281">
    <property type="term" value="P:DNA repair"/>
    <property type="evidence" value="ECO:0007669"/>
    <property type="project" value="UniProtKB-KW"/>
</dbReference>
<dbReference type="GO" id="GO:0000723">
    <property type="term" value="P:telomere maintenance"/>
    <property type="evidence" value="ECO:0007669"/>
    <property type="project" value="EnsemblPlants"/>
</dbReference>
<dbReference type="GO" id="GO:0009650">
    <property type="term" value="P:UV protection"/>
    <property type="evidence" value="ECO:0007669"/>
    <property type="project" value="EnsemblPlants"/>
</dbReference>
<dbReference type="CDD" id="cd09900">
    <property type="entry name" value="H3TH_XPG-like"/>
    <property type="match status" value="1"/>
</dbReference>
<dbReference type="CDD" id="cd09869">
    <property type="entry name" value="PIN_GEN1"/>
    <property type="match status" value="1"/>
</dbReference>
<dbReference type="FunFam" id="1.10.150.20:FF:000030">
    <property type="entry name" value="Flap endonuclease GEN-like 1"/>
    <property type="match status" value="1"/>
</dbReference>
<dbReference type="FunFam" id="3.40.50.1010:FF:000030">
    <property type="entry name" value="flap endonuclease GEN-like 2"/>
    <property type="match status" value="1"/>
</dbReference>
<dbReference type="Gene3D" id="1.10.150.20">
    <property type="entry name" value="5' to 3' exonuclease, C-terminal subdomain"/>
    <property type="match status" value="1"/>
</dbReference>
<dbReference type="Gene3D" id="3.40.50.1010">
    <property type="entry name" value="5'-nuclease"/>
    <property type="match status" value="1"/>
</dbReference>
<dbReference type="InterPro" id="IPR036279">
    <property type="entry name" value="5-3_exonuclease_C_sf"/>
</dbReference>
<dbReference type="InterPro" id="IPR008918">
    <property type="entry name" value="HhH2"/>
</dbReference>
<dbReference type="InterPro" id="IPR029060">
    <property type="entry name" value="PIN-like_dom_sf"/>
</dbReference>
<dbReference type="InterPro" id="IPR006086">
    <property type="entry name" value="XPG-I_dom"/>
</dbReference>
<dbReference type="InterPro" id="IPR006084">
    <property type="entry name" value="XPG/Rad2"/>
</dbReference>
<dbReference type="InterPro" id="IPR006085">
    <property type="entry name" value="XPG_DNA_repair_N"/>
</dbReference>
<dbReference type="PANTHER" id="PTHR11081">
    <property type="entry name" value="FLAP ENDONUCLEASE FAMILY MEMBER"/>
    <property type="match status" value="1"/>
</dbReference>
<dbReference type="PANTHER" id="PTHR11081:SF54">
    <property type="entry name" value="SINGLE-STRAND DNA ENDONUCLEASE 1"/>
    <property type="match status" value="1"/>
</dbReference>
<dbReference type="Pfam" id="PF25386">
    <property type="entry name" value="Chromo_SEND1"/>
    <property type="match status" value="1"/>
</dbReference>
<dbReference type="Pfam" id="PF00867">
    <property type="entry name" value="XPG_I"/>
    <property type="match status" value="1"/>
</dbReference>
<dbReference type="Pfam" id="PF00752">
    <property type="entry name" value="XPG_N"/>
    <property type="match status" value="1"/>
</dbReference>
<dbReference type="PRINTS" id="PR00853">
    <property type="entry name" value="XPGRADSUPER"/>
</dbReference>
<dbReference type="SMART" id="SM00279">
    <property type="entry name" value="HhH2"/>
    <property type="match status" value="1"/>
</dbReference>
<dbReference type="SMART" id="SM00484">
    <property type="entry name" value="XPGI"/>
    <property type="match status" value="1"/>
</dbReference>
<dbReference type="SMART" id="SM00485">
    <property type="entry name" value="XPGN"/>
    <property type="match status" value="1"/>
</dbReference>
<dbReference type="SUPFAM" id="SSF47807">
    <property type="entry name" value="5' to 3' exonuclease, C-terminal subdomain"/>
    <property type="match status" value="1"/>
</dbReference>
<dbReference type="SUPFAM" id="SSF88723">
    <property type="entry name" value="PIN domain-like"/>
    <property type="match status" value="1"/>
</dbReference>
<gene>
    <name evidence="9" type="primary">SEND1</name>
    <name type="synonym">GEN2</name>
    <name evidence="10" type="ordered locus">Os08g0101600</name>
    <name evidence="10" type="ordered locus">LOC_Os08g01130</name>
    <name type="ORF">B1147B12.17</name>
    <name evidence="11" type="ORF">OsJ_25722</name>
</gene>
<comment type="function">
    <text evidence="5 8">Single-stranded DNA endonuclease activity in vitro (PubMed:12602891). May not be active as double-stranded DNA endonuclease (PubMed:12602891). Endonuclease which cleaves flap structures at the junction between single-stranded DNA and double-stranded DNA with a specific cleavage site in the 5' overhang strand exactly one nucleotide 3' of the branch point (By similarity). Structure- and sequence-specific nuclease that resolves holliday junctions (HJs) by symmetrically oriented incisions in two opposing strands near the junction point, thus leading to ligatable products; HJs are physical links between homologous DNA molecules that arise as central intermediary structures during homologous recombination and repair in meiotic and somatic cells (By similarity). Probably involved in the resolution of toxic replication structures to ensure genome stability, and to maintain telomere integrity and replication (By similarity).</text>
</comment>
<comment type="cofactor">
    <cofactor evidence="2">
        <name>Mg(2+)</name>
        <dbReference type="ChEBI" id="CHEBI:18420"/>
    </cofactor>
    <text evidence="2">Binds 2 magnesium ions per subunit. They probably participate in the reaction catalyzed by the enzyme. May bind an additional third magnesium ion after substrate binding.</text>
</comment>
<comment type="subcellular location">
    <subcellularLocation>
        <location evidence="10">Nucleus</location>
    </subcellularLocation>
</comment>
<comment type="tissue specificity">
    <text evidence="8">Highly expressed in shoot apical meristem (SAM) and young leaves. Expressed in roots, flag leaf and panicles.</text>
</comment>
<comment type="induction">
    <text evidence="8">By the DNA-damaging agents methyl methanesulfonate (MMS), H(2)O(2) and UV. Down-regulated by sucrose starvation and the cell cycle inhibitors aphidicolin, hydroxyurea and colchicine.</text>
</comment>
<comment type="similarity">
    <text evidence="10">Belongs to the XPG/RAD2 endonuclease family. GEN subfamily.</text>
</comment>
<evidence type="ECO:0000250" key="1">
    <source>
        <dbReference type="UniProtKB" id="P39748"/>
    </source>
</evidence>
<evidence type="ECO:0000250" key="2">
    <source>
        <dbReference type="UniProtKB" id="Q17RS7"/>
    </source>
</evidence>
<evidence type="ECO:0000250" key="3">
    <source>
        <dbReference type="UniProtKB" id="Q58839"/>
    </source>
</evidence>
<evidence type="ECO:0000250" key="4">
    <source>
        <dbReference type="UniProtKB" id="Q9LPD2"/>
    </source>
</evidence>
<evidence type="ECO:0000250" key="5">
    <source>
        <dbReference type="UniProtKB" id="Q9M2Z3"/>
    </source>
</evidence>
<evidence type="ECO:0000250" key="6">
    <source>
        <dbReference type="UniProtKB" id="Q9UQ84"/>
    </source>
</evidence>
<evidence type="ECO:0000256" key="7">
    <source>
        <dbReference type="SAM" id="MobiDB-lite"/>
    </source>
</evidence>
<evidence type="ECO:0000269" key="8">
    <source>
    </source>
</evidence>
<evidence type="ECO:0000303" key="9">
    <source>
    </source>
</evidence>
<evidence type="ECO:0000305" key="10"/>
<evidence type="ECO:0000312" key="11">
    <source>
        <dbReference type="EMBL" id="EEE67892.1"/>
    </source>
</evidence>
<proteinExistence type="evidence at transcript level"/>
<sequence length="641" mass="69918">MGVKNLWDILESCKKKLPLHHLQNKKVCVDLSCWLVQMYSANRSPAFAKDKVYLKNLFHRIRALLALNCTLLFVTDGAIPSLKLATYRRRLGSISHAAKESDQPNSHPSISLRRNKGSEFSCMIKEAKRLGMALGIPCLDGLEEAEAQCASLDLESLCDGCFTSDSDAFLFGARTVYRDVFIGEGGYVICYEMEDIEKTLGFGRNSLISLAVLLGSDYSNGVNGFGPETACRLVKSVGDNLILDQILSNGVKATRKCKGKNSGNKVDDMCPKASSCEVGMTQDSDGQFRDVINAYLEPKCHSPDSEAVQRVCGQHPFLRPQLQKICEEYFDWSPEKTDQYILPKIAERELRRFSDLRSASSALGIKPLLSEIPVPCPVLAIVKQRKVHGNECYEVSWRNIEGLQVSVVPGDLVKSACPEKITEFLEKKGEEKKQKRRARPKKSGQAAVKDVDEQLQELLLGIEADSGGILGATASVCQTLTAAYTVAVEDVVDLSSPSPPLRKLSKSQKKMMAEDVNVAGMNMNKMESESSFSTQSSTSDVDNQLIDLSSPLAGGDNGMKGGRRALADISNVGSHSTETDGGGGGGGGVASVGHGTTIDLSSPSPAIGDRSRVHHDDDDVIHERKARDLRMFLDSIRNELY</sequence>
<organism>
    <name type="scientific">Oryza sativa subsp. japonica</name>
    <name type="common">Rice</name>
    <dbReference type="NCBI Taxonomy" id="39947"/>
    <lineage>
        <taxon>Eukaryota</taxon>
        <taxon>Viridiplantae</taxon>
        <taxon>Streptophyta</taxon>
        <taxon>Embryophyta</taxon>
        <taxon>Tracheophyta</taxon>
        <taxon>Spermatophyta</taxon>
        <taxon>Magnoliopsida</taxon>
        <taxon>Liliopsida</taxon>
        <taxon>Poales</taxon>
        <taxon>Poaceae</taxon>
        <taxon>BOP clade</taxon>
        <taxon>Oryzoideae</taxon>
        <taxon>Oryzeae</taxon>
        <taxon>Oryzinae</taxon>
        <taxon>Oryza</taxon>
        <taxon>Oryza sativa</taxon>
    </lineage>
</organism>
<name>GENL2_ORYSJ</name>
<keyword id="KW-0227">DNA damage</keyword>
<keyword id="KW-0234">DNA repair</keyword>
<keyword id="KW-0255">Endonuclease</keyword>
<keyword id="KW-0378">Hydrolase</keyword>
<keyword id="KW-0460">Magnesium</keyword>
<keyword id="KW-0479">Metal-binding</keyword>
<keyword id="KW-0540">Nuclease</keyword>
<keyword id="KW-0539">Nucleus</keyword>
<keyword id="KW-1185">Reference proteome</keyword>
<accession>Q8W5R1</accession>
<accession>B9FYM5</accession>